<feature type="chain" id="PRO_1000144422" description="Large ribosomal subunit protein bL17">
    <location>
        <begin position="1"/>
        <end position="127"/>
    </location>
</feature>
<dbReference type="EMBL" id="AP009240">
    <property type="protein sequence ID" value="BAG79093.1"/>
    <property type="molecule type" value="Genomic_DNA"/>
</dbReference>
<dbReference type="RefSeq" id="WP_001216368.1">
    <property type="nucleotide sequence ID" value="NC_011415.1"/>
</dbReference>
<dbReference type="SMR" id="B6I208"/>
<dbReference type="GeneID" id="97442834"/>
<dbReference type="KEGG" id="ecy:ECSE_3569"/>
<dbReference type="HOGENOM" id="CLU_074407_2_0_6"/>
<dbReference type="Proteomes" id="UP000008199">
    <property type="component" value="Chromosome"/>
</dbReference>
<dbReference type="GO" id="GO:0022625">
    <property type="term" value="C:cytosolic large ribosomal subunit"/>
    <property type="evidence" value="ECO:0007669"/>
    <property type="project" value="TreeGrafter"/>
</dbReference>
<dbReference type="GO" id="GO:0003735">
    <property type="term" value="F:structural constituent of ribosome"/>
    <property type="evidence" value="ECO:0007669"/>
    <property type="project" value="InterPro"/>
</dbReference>
<dbReference type="GO" id="GO:0006412">
    <property type="term" value="P:translation"/>
    <property type="evidence" value="ECO:0007669"/>
    <property type="project" value="UniProtKB-UniRule"/>
</dbReference>
<dbReference type="FunFam" id="3.90.1030.10:FF:000001">
    <property type="entry name" value="50S ribosomal protein L17"/>
    <property type="match status" value="1"/>
</dbReference>
<dbReference type="Gene3D" id="3.90.1030.10">
    <property type="entry name" value="Ribosomal protein L17"/>
    <property type="match status" value="1"/>
</dbReference>
<dbReference type="HAMAP" id="MF_01368">
    <property type="entry name" value="Ribosomal_bL17"/>
    <property type="match status" value="1"/>
</dbReference>
<dbReference type="InterPro" id="IPR000456">
    <property type="entry name" value="Ribosomal_bL17"/>
</dbReference>
<dbReference type="InterPro" id="IPR047859">
    <property type="entry name" value="Ribosomal_bL17_CS"/>
</dbReference>
<dbReference type="InterPro" id="IPR036373">
    <property type="entry name" value="Ribosomal_bL17_sf"/>
</dbReference>
<dbReference type="NCBIfam" id="TIGR00059">
    <property type="entry name" value="L17"/>
    <property type="match status" value="1"/>
</dbReference>
<dbReference type="PANTHER" id="PTHR14413:SF16">
    <property type="entry name" value="LARGE RIBOSOMAL SUBUNIT PROTEIN BL17M"/>
    <property type="match status" value="1"/>
</dbReference>
<dbReference type="PANTHER" id="PTHR14413">
    <property type="entry name" value="RIBOSOMAL PROTEIN L17"/>
    <property type="match status" value="1"/>
</dbReference>
<dbReference type="Pfam" id="PF01196">
    <property type="entry name" value="Ribosomal_L17"/>
    <property type="match status" value="1"/>
</dbReference>
<dbReference type="SUPFAM" id="SSF64263">
    <property type="entry name" value="Prokaryotic ribosomal protein L17"/>
    <property type="match status" value="1"/>
</dbReference>
<dbReference type="PROSITE" id="PS01167">
    <property type="entry name" value="RIBOSOMAL_L17"/>
    <property type="match status" value="1"/>
</dbReference>
<keyword id="KW-0687">Ribonucleoprotein</keyword>
<keyword id="KW-0689">Ribosomal protein</keyword>
<sequence length="127" mass="14365">MRHRKSGRQLNRNSSHRQAMFRNMAGSLVRHEIIKTTLPKAKELRRVVEPLITLAKTDSVANRRLAFARTRDNEIVAKLFNELGPRFASRAGGYTRILKCGFRAGDNAPMAYIELVDRSEKAEAAAE</sequence>
<protein>
    <recommendedName>
        <fullName evidence="1">Large ribosomal subunit protein bL17</fullName>
    </recommendedName>
    <alternativeName>
        <fullName evidence="2">50S ribosomal protein L17</fullName>
    </alternativeName>
</protein>
<proteinExistence type="inferred from homology"/>
<reference key="1">
    <citation type="journal article" date="2008" name="DNA Res.">
        <title>Complete genome sequence and comparative analysis of the wild-type commensal Escherichia coli strain SE11 isolated from a healthy adult.</title>
        <authorList>
            <person name="Oshima K."/>
            <person name="Toh H."/>
            <person name="Ogura Y."/>
            <person name="Sasamoto H."/>
            <person name="Morita H."/>
            <person name="Park S.-H."/>
            <person name="Ooka T."/>
            <person name="Iyoda S."/>
            <person name="Taylor T.D."/>
            <person name="Hayashi T."/>
            <person name="Itoh K."/>
            <person name="Hattori M."/>
        </authorList>
    </citation>
    <scope>NUCLEOTIDE SEQUENCE [LARGE SCALE GENOMIC DNA]</scope>
    <source>
        <strain>SE11</strain>
    </source>
</reference>
<name>RL17_ECOSE</name>
<comment type="subunit">
    <text evidence="1">Part of the 50S ribosomal subunit. Contacts protein L32.</text>
</comment>
<comment type="similarity">
    <text evidence="1">Belongs to the bacterial ribosomal protein bL17 family.</text>
</comment>
<organism>
    <name type="scientific">Escherichia coli (strain SE11)</name>
    <dbReference type="NCBI Taxonomy" id="409438"/>
    <lineage>
        <taxon>Bacteria</taxon>
        <taxon>Pseudomonadati</taxon>
        <taxon>Pseudomonadota</taxon>
        <taxon>Gammaproteobacteria</taxon>
        <taxon>Enterobacterales</taxon>
        <taxon>Enterobacteriaceae</taxon>
        <taxon>Escherichia</taxon>
    </lineage>
</organism>
<gene>
    <name evidence="1" type="primary">rplQ</name>
    <name type="ordered locus">ECSE_3569</name>
</gene>
<accession>B6I208</accession>
<evidence type="ECO:0000255" key="1">
    <source>
        <dbReference type="HAMAP-Rule" id="MF_01368"/>
    </source>
</evidence>
<evidence type="ECO:0000305" key="2"/>